<keyword id="KW-0963">Cytoplasm</keyword>
<keyword id="KW-0456">Lyase</keyword>
<keyword id="KW-1185">Reference proteome</keyword>
<keyword id="KW-0816">Tricarboxylic acid cycle</keyword>
<gene>
    <name evidence="1" type="primary">fumC</name>
    <name type="synonym">fum</name>
    <name type="ordered locus">MT1130</name>
</gene>
<evidence type="ECO:0000255" key="1">
    <source>
        <dbReference type="HAMAP-Rule" id="MF_00743"/>
    </source>
</evidence>
<evidence type="ECO:0000305" key="2"/>
<protein>
    <recommendedName>
        <fullName evidence="1">Fumarate hydratase class II</fullName>
        <shortName evidence="1">Fumarase C</shortName>
        <ecNumber evidence="1">4.2.1.2</ecNumber>
    </recommendedName>
    <alternativeName>
        <fullName evidence="1">Aerobic fumarase</fullName>
    </alternativeName>
    <alternativeName>
        <fullName evidence="1">Iron-independent fumarase</fullName>
    </alternativeName>
</protein>
<reference key="1">
    <citation type="journal article" date="2002" name="J. Bacteriol.">
        <title>Whole-genome comparison of Mycobacterium tuberculosis clinical and laboratory strains.</title>
        <authorList>
            <person name="Fleischmann R.D."/>
            <person name="Alland D."/>
            <person name="Eisen J.A."/>
            <person name="Carpenter L."/>
            <person name="White O."/>
            <person name="Peterson J.D."/>
            <person name="DeBoy R.T."/>
            <person name="Dodson R.J."/>
            <person name="Gwinn M.L."/>
            <person name="Haft D.H."/>
            <person name="Hickey E.K."/>
            <person name="Kolonay J.F."/>
            <person name="Nelson W.C."/>
            <person name="Umayam L.A."/>
            <person name="Ermolaeva M.D."/>
            <person name="Salzberg S.L."/>
            <person name="Delcher A."/>
            <person name="Utterback T.R."/>
            <person name="Weidman J.F."/>
            <person name="Khouri H.M."/>
            <person name="Gill J."/>
            <person name="Mikula A."/>
            <person name="Bishai W."/>
            <person name="Jacobs W.R. Jr."/>
            <person name="Venter J.C."/>
            <person name="Fraser C.M."/>
        </authorList>
    </citation>
    <scope>NUCLEOTIDE SEQUENCE [LARGE SCALE GENOMIC DNA]</scope>
    <source>
        <strain>CDC 1551 / Oshkosh</strain>
    </source>
</reference>
<accession>P9WN92</accession>
<accession>L0T5U4</accession>
<accession>O53446</accession>
<dbReference type="EC" id="4.2.1.2" evidence="1"/>
<dbReference type="EMBL" id="AE000516">
    <property type="protein sequence ID" value="AAK45388.1"/>
    <property type="molecule type" value="Genomic_DNA"/>
</dbReference>
<dbReference type="PIR" id="H70896">
    <property type="entry name" value="H70896"/>
</dbReference>
<dbReference type="RefSeq" id="WP_003405805.1">
    <property type="nucleotide sequence ID" value="NZ_KK341227.1"/>
</dbReference>
<dbReference type="SMR" id="P9WN92"/>
<dbReference type="KEGG" id="mtc:MT1130"/>
<dbReference type="PATRIC" id="fig|83331.31.peg.1220"/>
<dbReference type="HOGENOM" id="CLU_021594_4_1_11"/>
<dbReference type="UniPathway" id="UPA00223">
    <property type="reaction ID" value="UER01007"/>
</dbReference>
<dbReference type="Proteomes" id="UP000001020">
    <property type="component" value="Chromosome"/>
</dbReference>
<dbReference type="GO" id="GO:0005737">
    <property type="term" value="C:cytoplasm"/>
    <property type="evidence" value="ECO:0007669"/>
    <property type="project" value="UniProtKB-SubCell"/>
</dbReference>
<dbReference type="GO" id="GO:0004333">
    <property type="term" value="F:fumarate hydratase activity"/>
    <property type="evidence" value="ECO:0007669"/>
    <property type="project" value="UniProtKB-UniRule"/>
</dbReference>
<dbReference type="GO" id="GO:0006106">
    <property type="term" value="P:fumarate metabolic process"/>
    <property type="evidence" value="ECO:0007669"/>
    <property type="project" value="InterPro"/>
</dbReference>
<dbReference type="GO" id="GO:0006099">
    <property type="term" value="P:tricarboxylic acid cycle"/>
    <property type="evidence" value="ECO:0007669"/>
    <property type="project" value="UniProtKB-UniRule"/>
</dbReference>
<dbReference type="CDD" id="cd01362">
    <property type="entry name" value="Fumarase_classII"/>
    <property type="match status" value="1"/>
</dbReference>
<dbReference type="FunFam" id="1.10.40.30:FF:000008">
    <property type="entry name" value="Fumarate hydratase class II"/>
    <property type="match status" value="1"/>
</dbReference>
<dbReference type="FunFam" id="1.10.275.10:FF:000001">
    <property type="entry name" value="Fumarate hydratase, mitochondrial"/>
    <property type="match status" value="1"/>
</dbReference>
<dbReference type="FunFam" id="1.20.200.10:FF:000001">
    <property type="entry name" value="Fumarate hydratase, mitochondrial"/>
    <property type="match status" value="1"/>
</dbReference>
<dbReference type="Gene3D" id="1.10.40.30">
    <property type="entry name" value="Fumarase/aspartase (C-terminal domain)"/>
    <property type="match status" value="1"/>
</dbReference>
<dbReference type="Gene3D" id="1.20.200.10">
    <property type="entry name" value="Fumarase/aspartase (Central domain)"/>
    <property type="match status" value="1"/>
</dbReference>
<dbReference type="Gene3D" id="1.10.275.10">
    <property type="entry name" value="Fumarase/aspartase (N-terminal domain)"/>
    <property type="match status" value="1"/>
</dbReference>
<dbReference type="HAMAP" id="MF_00743">
    <property type="entry name" value="FumaraseC"/>
    <property type="match status" value="1"/>
</dbReference>
<dbReference type="InterPro" id="IPR005677">
    <property type="entry name" value="Fum_hydII"/>
</dbReference>
<dbReference type="InterPro" id="IPR024083">
    <property type="entry name" value="Fumarase/histidase_N"/>
</dbReference>
<dbReference type="InterPro" id="IPR018951">
    <property type="entry name" value="Fumarase_C_C"/>
</dbReference>
<dbReference type="InterPro" id="IPR020557">
    <property type="entry name" value="Fumarate_lyase_CS"/>
</dbReference>
<dbReference type="InterPro" id="IPR000362">
    <property type="entry name" value="Fumarate_lyase_fam"/>
</dbReference>
<dbReference type="InterPro" id="IPR022761">
    <property type="entry name" value="Fumarate_lyase_N"/>
</dbReference>
<dbReference type="InterPro" id="IPR008948">
    <property type="entry name" value="L-Aspartase-like"/>
</dbReference>
<dbReference type="NCBIfam" id="NF008909">
    <property type="entry name" value="PRK12273.1"/>
    <property type="match status" value="1"/>
</dbReference>
<dbReference type="PANTHER" id="PTHR11444">
    <property type="entry name" value="ASPARTATEAMMONIA/ARGININOSUCCINATE/ADENYLOSUCCINATE LYASE"/>
    <property type="match status" value="1"/>
</dbReference>
<dbReference type="PANTHER" id="PTHR11444:SF22">
    <property type="entry name" value="FUMARATE HYDRATASE CLASS II"/>
    <property type="match status" value="1"/>
</dbReference>
<dbReference type="Pfam" id="PF10415">
    <property type="entry name" value="FumaraseC_C"/>
    <property type="match status" value="1"/>
</dbReference>
<dbReference type="Pfam" id="PF00206">
    <property type="entry name" value="Lyase_1"/>
    <property type="match status" value="1"/>
</dbReference>
<dbReference type="PRINTS" id="PR00149">
    <property type="entry name" value="FUMRATELYASE"/>
</dbReference>
<dbReference type="SUPFAM" id="SSF48557">
    <property type="entry name" value="L-aspartase-like"/>
    <property type="match status" value="1"/>
</dbReference>
<dbReference type="PROSITE" id="PS00163">
    <property type="entry name" value="FUMARATE_LYASES"/>
    <property type="match status" value="1"/>
</dbReference>
<comment type="function">
    <text evidence="1">Involved in the TCA cycle. Catalyzes the stereospecific interconversion of fumarate to L-malate.</text>
</comment>
<comment type="catalytic activity">
    <reaction evidence="1">
        <text>(S)-malate = fumarate + H2O</text>
        <dbReference type="Rhea" id="RHEA:12460"/>
        <dbReference type="ChEBI" id="CHEBI:15377"/>
        <dbReference type="ChEBI" id="CHEBI:15589"/>
        <dbReference type="ChEBI" id="CHEBI:29806"/>
        <dbReference type="EC" id="4.2.1.2"/>
    </reaction>
</comment>
<comment type="pathway">
    <text evidence="1">Carbohydrate metabolism; tricarboxylic acid cycle; (S)-malate from fumarate: step 1/1.</text>
</comment>
<comment type="subunit">
    <text evidence="1">Homotetramer.</text>
</comment>
<comment type="subcellular location">
    <subcellularLocation>
        <location evidence="1">Cytoplasm</location>
    </subcellularLocation>
</comment>
<comment type="miscellaneous">
    <text evidence="1">There are 2 substrate-binding sites: the catalytic A site, and the non-catalytic B site that may play a role in the transfer of substrate or product between the active site and the solvent. Alternatively, the B site may bind allosteric effectors.</text>
</comment>
<comment type="similarity">
    <text evidence="1 2">Belongs to the class-II fumarase/aspartase family. Fumarase subfamily.</text>
</comment>
<proteinExistence type="inferred from homology"/>
<name>FUMC_MYCTO</name>
<feature type="chain" id="PRO_0000427167" description="Fumarate hydratase class II">
    <location>
        <begin position="1"/>
        <end position="474"/>
    </location>
</feature>
<feature type="active site" description="Proton donor/acceptor" evidence="1">
    <location>
        <position position="187"/>
    </location>
</feature>
<feature type="active site" evidence="1">
    <location>
        <position position="318"/>
    </location>
</feature>
<feature type="binding site" evidence="1">
    <location>
        <begin position="104"/>
        <end position="106"/>
    </location>
    <ligand>
        <name>substrate</name>
    </ligand>
</feature>
<feature type="binding site" description="in site B" evidence="1">
    <location>
        <begin position="128"/>
        <end position="131"/>
    </location>
    <ligand>
        <name>substrate</name>
    </ligand>
</feature>
<feature type="binding site" evidence="1">
    <location>
        <begin position="138"/>
        <end position="140"/>
    </location>
    <ligand>
        <name>substrate</name>
    </ligand>
</feature>
<feature type="binding site" evidence="1">
    <location>
        <position position="186"/>
    </location>
    <ligand>
        <name>substrate</name>
    </ligand>
</feature>
<feature type="binding site" evidence="1">
    <location>
        <position position="319"/>
    </location>
    <ligand>
        <name>substrate</name>
    </ligand>
</feature>
<feature type="binding site" evidence="1">
    <location>
        <begin position="324"/>
        <end position="326"/>
    </location>
    <ligand>
        <name>substrate</name>
    </ligand>
</feature>
<feature type="site" description="Important for catalytic activity" evidence="1">
    <location>
        <position position="331"/>
    </location>
</feature>
<sequence>MAVDADSANYRIEHDTMGEVRVPAKALWRAQTQRAVENFPISGRGLERTQIRALGLLKGACAQVNSDLGLLAPEKADAIIAAAAEIADGQHDDQFPIDVFQTGSGTSSNMNTNEVIASIAAKGGVTLHPNDDVNMSQSSNDTFPTATHIAATEAAVAHLIPALQQLHDALAAKALDWHTVVKSGRTHLMDAVPVTLGQEFSGYARQIEAGIERVRACLPRLGELAIGGTAVGTGLNAPDDFGVRVVAVLVAQTGLSELRTAANSFEAQAARDGLVEASGALRTIAVSLTKIANDIRWMGSGPLTGLAEIQLPDLQPGSSIMPGKVNPVLPEAVTQVAAQVIGNDAAIAWGGANGAFELNVYIPMMARNILESFKLLTNVSRLFAQRCIAGLTANVEHLRRLAESSPSIVTPLNSAIGYEEAAAVAKQALKERKTIRQTVIDRGLIGDRLSIEDLDRRLDVLAMAKAEQLDSDRL</sequence>
<organism>
    <name type="scientific">Mycobacterium tuberculosis (strain CDC 1551 / Oshkosh)</name>
    <dbReference type="NCBI Taxonomy" id="83331"/>
    <lineage>
        <taxon>Bacteria</taxon>
        <taxon>Bacillati</taxon>
        <taxon>Actinomycetota</taxon>
        <taxon>Actinomycetes</taxon>
        <taxon>Mycobacteriales</taxon>
        <taxon>Mycobacteriaceae</taxon>
        <taxon>Mycobacterium</taxon>
        <taxon>Mycobacterium tuberculosis complex</taxon>
    </lineage>
</organism>